<organismHost>
    <name type="scientific">Hordeum vulgare</name>
    <name type="common">Barley</name>
    <dbReference type="NCBI Taxonomy" id="4513"/>
</organismHost>
<accession>Q01206</accession>
<reference key="1">
    <citation type="journal article" date="1990" name="J. Gen. Virol.">
        <title>Nucleotide sequence of barley yellow mosaic virus RNA 1: a close evolutionary relationship with potyviruses.</title>
        <authorList>
            <person name="Kashiwazaki S."/>
            <person name="Minobe Y."/>
            <person name="Omura T."/>
            <person name="Hibino H."/>
        </authorList>
    </citation>
    <scope>NUCLEOTIDE SEQUENCE [GENOMIC RNA]</scope>
</reference>
<reference key="2">
    <citation type="journal article" date="1989" name="J. Gen. Virol.">
        <title>Nucleotide sequence of the capsid protein gene of barley yellow mosaic virus.</title>
        <authorList>
            <person name="Kashiwazaki S."/>
            <person name="Hayano Y."/>
            <person name="Minobe Y."/>
            <person name="Omura T."/>
            <person name="Hibino H."/>
            <person name="Tsuchizaki T."/>
        </authorList>
    </citation>
    <scope>NUCLEOTIDE SEQUENCE [GENOMIC RNA]</scope>
</reference>
<sequence>MEQTLAQAVSRKSKTDTPMAEERKHFSPMNFSANFVAPELFYSANVRKIKNIFRERSTTRFLDAISSDFELVAFLTLSPAHLMQLETVLRHEMRSCVVPIVTSDASFETVAVIKTALDGMRFHFGYTTLEKGWISMMRHAESCLQESSSSAVNDLQTQIKRVGSLLLSGKNRVEGCELSVLNLTARRFRIEYGLNGTYFGEHVAMLRGLKRYIYGTVPKEFLWAKTKKHSLFTIPAWIKRTPIDCFLFCLRVIPILHRCGVAVSLIYWSCAAALNFPAFMSFLFKRQFAKYLAHSFAKHSIYFMFLTIVAILWSFRTFTSQKPKIVLQARSTAEKEKKLMMILASVVGITYLFDYDIAEALGNCLHKISRLSSYLLDDHQGIASRMFGASYGLQAGDSAEDAVTTIISDLLSVTFKIVDEDASQGTVEDASETTFHSWVGVNTLAGRNMSRPLQYSVNETYALTPQNVQLQARKMADANNCWSMVVGHTGSGKSTYLPVQYSNYLSTKSDRRQQILICEPTQAATENVCAGVAANLGRAVYGRHEGWSRMGDHCIQVMTYGSALQCHAMDPSFISTFDAIFLDEAHDVKEHSLVFESICDTFKSVRKFYVSATPRDGSVCPEAARKYPLHVETSVCDSYRKFIAAQGGGDLLDISKHDTALVFLAGRPECIKAANAWNASVTGEKRAFSLSSDNFATDFSMLTERLKTHKTIIFTTNIIETGVTLSVDCVVDFGHTMRPCLDLNQKALRLDRRRVTRNERQQRIGRAGRLKDGYAIVCGDVDRAVNVISPDVLYGAALLSFKHNVPFYMNETFESSWLEGITKAQADTMTIFKLPIFLTRDLINADGSVAKEFLDVLKKHQFTTSDIKQAPSVTAKHIFPTWASYFSLHQALHYGDDKDEVPHELRYARVPFSVTTLSKFDWPALALACEKHRASMSNVFAGIEEPARVVTLQTNPANIQASITHLTHMSKNYKTLIENNQHVRQSMVTNVMYKWFSSTRITKDLDRNLRRCTDNLAVVEATLSSLRQILAGNTQVHATPHMQSTLEDIIGLQASDTLTEESLASALGIFVPKSNLFLLLATKGFKLVYVVCILLLVNLVYLGLRKWREHLKQKGSNEILTNTMPVSEGGEILAEVMKMEPKMRKNIKKDMDAAVESKLCGFTFVFPDDDKIGLEGKGNKYRPREDARLMYSTREDATLDAWNEKAKERRKKVTDKSEPELRRAYEKRPYFNFYDLQTDSNILEAIFYTTEGDEFFRTADPNKDMNLVADKLRSFLDTKLVVGHHQRQMLEETAKVVIKDTKGTAHHMDISQHDPDHLKQNGSGKIGYPEHRGQFRQEGPAKTADYDLGVEFGTDTDDITLEASTGILLSQVGVDVATRVGRIFIGTFNMNCYFYSDWILVPGHLQDRSGNVTIQFPDQTVQTTTDALNANGVKRFYGLDVIAIRRPAILRPRTKLVKAFAIEEPVIAQMVFVDAQGVRKFTQSVRARKEENSGRWSHKISTVLGMCGCQFWTLERQIDGIHVATNYTKKRNEFQPFTQEVVDFINGPGTKIPYCPWVFDRPACGYASHTALFEKPTTLTDIIHMQASDGLHNINNAIEGFGSSLRGQLVSPPTESTRQRFDKLFGSGSFELIGQMNKGLIDKHVIVGENDDVHDFMREHPTFTWLKDFMNEYAPSVLSYSAYYKDLCKYNRAKHVLTYNPEELHYATKGLIKMLEDAGLTQGSVRTPQQVISDIQWNTSAGPSYQGKKRDLCAHLSDDEVLHLAEVCRQQFLEGKSTGVWNGSLKAELRTIEKVEAEKTRVFTASPITSLFAMKFYVDDFNKKFYATNLKAPHTVGINKFGRGWEKLHDKLNRPGWLHGSGDGSRFDSSIDPLFFDVVKTIRKHFLPSEHHKAIDLIYDEILNTTICLANGMVIKKNVGTQRQPSTVVDNTLVLMTAFLYAYIHKTGDRELALLNERFIFVCNGDDNKFAISPQFDEEFGHDFSPELVELGLTYEFDDITSDICENPYMSLTMVKTPFGVGFSLPVERIIAIMQWSKKGGVLHSYLAGISAIYESFNTPKLFKSIYAYLLWLTEEHEAEILAAMTQSSTALPIPSMLDVYRLHYGDDEIWLQAADPLTDAQKEDARIAAADGARFELADADRRRKVEADRVEAARVKKAADAALKPVNLTATRTPTEDDGKLKTPSGARIPSSAADGNWSVPATKQVNAGLTLKIPLNKLKSVPKSVMEHNNSVALESELKAWTDAVRTSLGITTDEAWIDALIPFIGWCCNNGTSDKHAENQVMQIDSGKGAVTEMSLSPFIVHARMNGGLRRIMRNYSDETVLLITNNKLVAHWSMKHGASANAKYAFDFFVPRSWMNPQDIEVSKQARLAALGTGTYNTMLTSDTTNLRKTTNHRVLDSDGHPELT</sequence>
<name>POL1_BAYMJ</name>
<feature type="chain" id="PRO_0000456244" description="Genome polyprotein 1">
    <location>
        <begin position="1"/>
        <end position="2410"/>
    </location>
</feature>
<feature type="chain" id="PRO_0000040546" description="Protein P3" evidence="5">
    <location>
        <begin position="1"/>
        <end position="328"/>
    </location>
</feature>
<feature type="chain" id="PRO_0000040547" description="6 kDa protein 1" evidence="5">
    <location>
        <begin position="329"/>
        <end position="394"/>
    </location>
</feature>
<feature type="chain" id="PRO_0000040548" description="Cytoplasmic inclusion protein" evidence="5">
    <location>
        <begin position="395"/>
        <end position="1053"/>
    </location>
</feature>
<feature type="chain" id="PRO_0000040549" description="6 kDa protein 2" evidence="5">
    <location>
        <begin position="1054"/>
        <end position="1175"/>
    </location>
</feature>
<feature type="chain" id="PRO_0000040550" description="Viral genome-linked protein" evidence="5">
    <location>
        <begin position="1176"/>
        <end position="1338"/>
    </location>
</feature>
<feature type="chain" id="PRO_0000040551" description="Nuclear inclusion protein A" evidence="5">
    <location>
        <begin position="1339"/>
        <end position="1586"/>
    </location>
</feature>
<feature type="chain" id="PRO_0000040552" description="Nuclear inclusion protein B" evidence="5">
    <location>
        <begin position="1587"/>
        <end position="2113"/>
    </location>
</feature>
<feature type="chain" id="PRO_0000040553" description="Coat protein" evidence="5">
    <location>
        <begin position="2114"/>
        <end position="2410"/>
    </location>
</feature>
<feature type="domain" description="Helicase ATP-binding" evidence="7">
    <location>
        <begin position="474"/>
        <end position="632"/>
    </location>
</feature>
<feature type="domain" description="Helicase C-terminal" evidence="8">
    <location>
        <begin position="647"/>
        <end position="813"/>
    </location>
</feature>
<feature type="domain" description="Peptidase C4" evidence="9">
    <location>
        <begin position="1359"/>
        <end position="1573"/>
    </location>
</feature>
<feature type="domain" description="RdRp catalytic" evidence="6">
    <location>
        <begin position="1857"/>
        <end position="1980"/>
    </location>
</feature>
<feature type="region of interest" description="Disordered" evidence="10">
    <location>
        <begin position="1"/>
        <end position="22"/>
    </location>
</feature>
<feature type="region of interest" description="Disordered" evidence="10">
    <location>
        <begin position="2173"/>
        <end position="2200"/>
    </location>
</feature>
<feature type="active site" description="For nuclear inclusion protein A activity" evidence="9">
    <location>
        <position position="1404"/>
    </location>
</feature>
<feature type="active site" description="For nuclear inclusion protein A activity" evidence="9">
    <location>
        <position position="1440"/>
    </location>
</feature>
<feature type="active site" description="For nuclear inclusion protein A activity" evidence="9">
    <location>
        <position position="1507"/>
    </location>
</feature>
<feature type="binding site" evidence="7">
    <location>
        <begin position="487"/>
        <end position="494"/>
    </location>
    <ligand>
        <name>ATP</name>
        <dbReference type="ChEBI" id="CHEBI:30616"/>
    </ligand>
</feature>
<feature type="site" description="Cleavage" evidence="5">
    <location>
        <begin position="328"/>
        <end position="329"/>
    </location>
</feature>
<feature type="site" description="Cleavage" evidence="5">
    <location>
        <begin position="394"/>
        <end position="395"/>
    </location>
</feature>
<feature type="site" description="Cleavage" evidence="5">
    <location>
        <begin position="1053"/>
        <end position="1054"/>
    </location>
</feature>
<feature type="site" description="Cleavage" evidence="5">
    <location>
        <begin position="1175"/>
        <end position="1176"/>
    </location>
</feature>
<feature type="site" description="Cleavage" evidence="5">
    <location>
        <begin position="1338"/>
        <end position="1339"/>
    </location>
</feature>
<feature type="site" description="Cleavage" evidence="5">
    <location>
        <begin position="1586"/>
        <end position="1587"/>
    </location>
</feature>
<feature type="site" description="Cleavage" evidence="5">
    <location>
        <begin position="2114"/>
        <end position="2115"/>
    </location>
</feature>
<feature type="modified residue" description="O-(5'-phospho-RNA)-tyrosine" evidence="2">
    <location>
        <position position="1234"/>
    </location>
</feature>
<organism>
    <name type="scientific">Barley yellow mosaic virus (strain Japanese II-1)</name>
    <name type="common">BaYMV</name>
    <dbReference type="NCBI Taxonomy" id="31729"/>
    <lineage>
        <taxon>Viruses</taxon>
        <taxon>Riboviria</taxon>
        <taxon>Orthornavirae</taxon>
        <taxon>Pisuviricota</taxon>
        <taxon>Stelpaviricetes</taxon>
        <taxon>Patatavirales</taxon>
        <taxon>Potyviridae</taxon>
        <taxon>Bymovirus</taxon>
        <taxon>Barley yellow mosaic virus</taxon>
    </lineage>
</organism>
<keyword id="KW-0067">ATP-binding</keyword>
<keyword id="KW-0167">Capsid protein</keyword>
<keyword id="KW-0191">Covalent protein-RNA linkage</keyword>
<keyword id="KW-1139">Helical capsid protein</keyword>
<keyword id="KW-0347">Helicase</keyword>
<keyword id="KW-1036">Host cytoplasmic vesicle</keyword>
<keyword id="KW-0378">Hydrolase</keyword>
<keyword id="KW-0547">Nucleotide-binding</keyword>
<keyword id="KW-0548">Nucleotidyltransferase</keyword>
<keyword id="KW-0597">Phosphoprotein</keyword>
<keyword id="KW-0696">RNA-directed RNA polymerase</keyword>
<keyword id="KW-0808">Transferase</keyword>
<keyword id="KW-0693">Viral RNA replication</keyword>
<keyword id="KW-0946">Virion</keyword>
<protein>
    <recommendedName>
        <fullName>Genome polyprotein 1</fullName>
    </recommendedName>
    <component>
        <recommendedName>
            <fullName>Protein P3</fullName>
        </recommendedName>
    </component>
    <component>
        <recommendedName>
            <fullName>6 kDa protein 1</fullName>
            <shortName>6K1</shortName>
        </recommendedName>
    </component>
    <component>
        <recommendedName>
            <fullName>Cytoplasmic inclusion protein</fullName>
            <shortName>CI</shortName>
            <ecNumber>3.6.4.-</ecNumber>
        </recommendedName>
    </component>
    <component>
        <recommendedName>
            <fullName>6 kDa protein 2</fullName>
            <shortName>6K2</shortName>
        </recommendedName>
    </component>
    <component>
        <recommendedName>
            <fullName>Viral genome-linked protein</fullName>
        </recommendedName>
        <alternativeName>
            <fullName>VPg</fullName>
        </alternativeName>
    </component>
    <component>
        <recommendedName>
            <fullName>Nuclear inclusion protein A</fullName>
            <shortName>NI-a</shortName>
            <shortName>NIa</shortName>
            <ecNumber>3.4.22.44</ecNumber>
        </recommendedName>
        <alternativeName>
            <fullName>NIa-pro</fullName>
        </alternativeName>
    </component>
    <component>
        <recommendedName>
            <fullName>Nuclear inclusion protein B</fullName>
            <shortName>NI-b</shortName>
            <shortName>NIb</shortName>
            <ecNumber>2.7.7.48</ecNumber>
        </recommendedName>
        <alternativeName>
            <fullName>RNA-directed RNA polymerase</fullName>
        </alternativeName>
    </component>
    <component>
        <recommendedName>
            <fullName>Coat protein</fullName>
            <shortName>CP</shortName>
        </recommendedName>
    </component>
</protein>
<dbReference type="EC" id="3.6.4.-"/>
<dbReference type="EC" id="3.4.22.44"/>
<dbReference type="EC" id="2.7.7.48"/>
<dbReference type="EMBL" id="D01091">
    <property type="protein sequence ID" value="BAA00875.1"/>
    <property type="molecule type" value="Genomic_RNA"/>
</dbReference>
<dbReference type="PIR" id="JQ1948">
    <property type="entry name" value="JQ1948"/>
</dbReference>
<dbReference type="SMR" id="Q01206"/>
<dbReference type="Proteomes" id="UP000007447">
    <property type="component" value="Genome"/>
</dbReference>
<dbReference type="GO" id="GO:0019029">
    <property type="term" value="C:helical viral capsid"/>
    <property type="evidence" value="ECO:0007669"/>
    <property type="project" value="UniProtKB-KW"/>
</dbReference>
<dbReference type="GO" id="GO:0044161">
    <property type="term" value="C:host cell cytoplasmic vesicle"/>
    <property type="evidence" value="ECO:0007669"/>
    <property type="project" value="UniProtKB-SubCell"/>
</dbReference>
<dbReference type="GO" id="GO:0005524">
    <property type="term" value="F:ATP binding"/>
    <property type="evidence" value="ECO:0007669"/>
    <property type="project" value="UniProtKB-KW"/>
</dbReference>
<dbReference type="GO" id="GO:0008234">
    <property type="term" value="F:cysteine-type peptidase activity"/>
    <property type="evidence" value="ECO:0007669"/>
    <property type="project" value="InterPro"/>
</dbReference>
<dbReference type="GO" id="GO:0004386">
    <property type="term" value="F:helicase activity"/>
    <property type="evidence" value="ECO:0007669"/>
    <property type="project" value="UniProtKB-KW"/>
</dbReference>
<dbReference type="GO" id="GO:0016818">
    <property type="term" value="F:hydrolase activity, acting on acid anhydrides, in phosphorus-containing anhydrides"/>
    <property type="evidence" value="ECO:0007669"/>
    <property type="project" value="InterPro"/>
</dbReference>
<dbReference type="GO" id="GO:0003723">
    <property type="term" value="F:RNA binding"/>
    <property type="evidence" value="ECO:0007669"/>
    <property type="project" value="InterPro"/>
</dbReference>
<dbReference type="GO" id="GO:0003968">
    <property type="term" value="F:RNA-directed RNA polymerase activity"/>
    <property type="evidence" value="ECO:0007669"/>
    <property type="project" value="UniProtKB-KW"/>
</dbReference>
<dbReference type="GO" id="GO:0005198">
    <property type="term" value="F:structural molecule activity"/>
    <property type="evidence" value="ECO:0007669"/>
    <property type="project" value="InterPro"/>
</dbReference>
<dbReference type="GO" id="GO:0006351">
    <property type="term" value="P:DNA-templated transcription"/>
    <property type="evidence" value="ECO:0007669"/>
    <property type="project" value="InterPro"/>
</dbReference>
<dbReference type="GO" id="GO:0006508">
    <property type="term" value="P:proteolysis"/>
    <property type="evidence" value="ECO:0007669"/>
    <property type="project" value="InterPro"/>
</dbReference>
<dbReference type="GO" id="GO:0039694">
    <property type="term" value="P:viral RNA genome replication"/>
    <property type="evidence" value="ECO:0007669"/>
    <property type="project" value="InterPro"/>
</dbReference>
<dbReference type="CDD" id="cd23175">
    <property type="entry name" value="ps-ssRNAv_Potyviridae_RdRp"/>
    <property type="match status" value="1"/>
</dbReference>
<dbReference type="Gene3D" id="3.30.70.270">
    <property type="match status" value="1"/>
</dbReference>
<dbReference type="Gene3D" id="3.40.50.300">
    <property type="entry name" value="P-loop containing nucleotide triphosphate hydrolases"/>
    <property type="match status" value="2"/>
</dbReference>
<dbReference type="Gene3D" id="2.40.10.10">
    <property type="entry name" value="Trypsin-like serine proteases"/>
    <property type="match status" value="1"/>
</dbReference>
<dbReference type="InterPro" id="IPR011545">
    <property type="entry name" value="DEAD/DEAH_box_helicase_dom"/>
</dbReference>
<dbReference type="InterPro" id="IPR043502">
    <property type="entry name" value="DNA/RNA_pol_sf"/>
</dbReference>
<dbReference type="InterPro" id="IPR014001">
    <property type="entry name" value="Helicase_ATP-bd"/>
</dbReference>
<dbReference type="InterPro" id="IPR001650">
    <property type="entry name" value="Helicase_C-like"/>
</dbReference>
<dbReference type="InterPro" id="IPR027417">
    <property type="entry name" value="P-loop_NTPase"/>
</dbReference>
<dbReference type="InterPro" id="IPR009003">
    <property type="entry name" value="Peptidase_S1_PA"/>
</dbReference>
<dbReference type="InterPro" id="IPR043504">
    <property type="entry name" value="Peptidase_S1_PA_chymotrypsin"/>
</dbReference>
<dbReference type="InterPro" id="IPR001592">
    <property type="entry name" value="Poty_coat"/>
</dbReference>
<dbReference type="InterPro" id="IPR001730">
    <property type="entry name" value="Potyv_NIa-pro_dom"/>
</dbReference>
<dbReference type="InterPro" id="IPR013648">
    <property type="entry name" value="PP_Potyviridae"/>
</dbReference>
<dbReference type="InterPro" id="IPR043128">
    <property type="entry name" value="Rev_trsase/Diguanyl_cyclase"/>
</dbReference>
<dbReference type="InterPro" id="IPR001205">
    <property type="entry name" value="RNA-dir_pol_C"/>
</dbReference>
<dbReference type="InterPro" id="IPR007094">
    <property type="entry name" value="RNA-dir_pol_PSvirus"/>
</dbReference>
<dbReference type="PANTHER" id="PTHR43519">
    <property type="entry name" value="ATP-DEPENDENT RNA HELICASE HRPB"/>
    <property type="match status" value="1"/>
</dbReference>
<dbReference type="PANTHER" id="PTHR43519:SF1">
    <property type="entry name" value="ATP-DEPENDENT RNA HELICASE HRPB"/>
    <property type="match status" value="1"/>
</dbReference>
<dbReference type="Pfam" id="PF00270">
    <property type="entry name" value="DEAD"/>
    <property type="match status" value="1"/>
</dbReference>
<dbReference type="Pfam" id="PF00863">
    <property type="entry name" value="Peptidase_C4"/>
    <property type="match status" value="1"/>
</dbReference>
<dbReference type="Pfam" id="PF00767">
    <property type="entry name" value="Poty_coat"/>
    <property type="match status" value="1"/>
</dbReference>
<dbReference type="Pfam" id="PF08440">
    <property type="entry name" value="Poty_PP"/>
    <property type="match status" value="1"/>
</dbReference>
<dbReference type="Pfam" id="PF00680">
    <property type="entry name" value="RdRP_1"/>
    <property type="match status" value="1"/>
</dbReference>
<dbReference type="SMART" id="SM00487">
    <property type="entry name" value="DEXDc"/>
    <property type="match status" value="1"/>
</dbReference>
<dbReference type="SMART" id="SM00490">
    <property type="entry name" value="HELICc"/>
    <property type="match status" value="1"/>
</dbReference>
<dbReference type="SUPFAM" id="SSF56672">
    <property type="entry name" value="DNA/RNA polymerases"/>
    <property type="match status" value="1"/>
</dbReference>
<dbReference type="SUPFAM" id="SSF52540">
    <property type="entry name" value="P-loop containing nucleoside triphosphate hydrolases"/>
    <property type="match status" value="2"/>
</dbReference>
<dbReference type="SUPFAM" id="SSF50494">
    <property type="entry name" value="Trypsin-like serine proteases"/>
    <property type="match status" value="1"/>
</dbReference>
<dbReference type="PROSITE" id="PS51192">
    <property type="entry name" value="HELICASE_ATP_BIND_1"/>
    <property type="match status" value="1"/>
</dbReference>
<dbReference type="PROSITE" id="PS51194">
    <property type="entry name" value="HELICASE_CTER"/>
    <property type="match status" value="1"/>
</dbReference>
<dbReference type="PROSITE" id="PS51436">
    <property type="entry name" value="POTYVIRUS_NIA_PRO"/>
    <property type="match status" value="1"/>
</dbReference>
<dbReference type="PROSITE" id="PS50507">
    <property type="entry name" value="RDRP_SSRNA_POS"/>
    <property type="match status" value="1"/>
</dbReference>
<evidence type="ECO:0000250" key="1">
    <source>
        <dbReference type="UniProtKB" id="P04517"/>
    </source>
</evidence>
<evidence type="ECO:0000250" key="2">
    <source>
        <dbReference type="UniProtKB" id="P09814"/>
    </source>
</evidence>
<evidence type="ECO:0000250" key="3">
    <source>
        <dbReference type="UniProtKB" id="P13529"/>
    </source>
</evidence>
<evidence type="ECO:0000250" key="4">
    <source>
        <dbReference type="UniProtKB" id="P18247"/>
    </source>
</evidence>
<evidence type="ECO:0000255" key="5"/>
<evidence type="ECO:0000255" key="6">
    <source>
        <dbReference type="PROSITE-ProRule" id="PRU00539"/>
    </source>
</evidence>
<evidence type="ECO:0000255" key="7">
    <source>
        <dbReference type="PROSITE-ProRule" id="PRU00541"/>
    </source>
</evidence>
<evidence type="ECO:0000255" key="8">
    <source>
        <dbReference type="PROSITE-ProRule" id="PRU00542"/>
    </source>
</evidence>
<evidence type="ECO:0000255" key="9">
    <source>
        <dbReference type="PROSITE-ProRule" id="PRU00766"/>
    </source>
</evidence>
<evidence type="ECO:0000256" key="10">
    <source>
        <dbReference type="SAM" id="MobiDB-lite"/>
    </source>
</evidence>
<evidence type="ECO:0000305" key="11"/>
<proteinExistence type="inferred from homology"/>
<comment type="function">
    <molecule>6 kDa protein 1</molecule>
    <text evidence="3">Indispensable for virus replication.</text>
</comment>
<comment type="function">
    <molecule>6 kDa protein 2</molecule>
    <text evidence="2">Indispensable for virus replication.</text>
</comment>
<comment type="function">
    <molecule>Viral genome-linked protein</molecule>
    <text evidence="4">Mediates the cap-independent, EIF4E-dependent translation of viral genomic RNAs (By similarity). Binds to the cap-binding site of host EIF4E and thus interferes with the host EIF4E-dependent mRNA export and translation (By similarity). VPg-RNA directly binds EIF4E and is a template for transcription (By similarity). Also forms trimeric complexes with EIF4E-EIF4G, which are templates for translation (By similarity).</text>
</comment>
<comment type="function">
    <molecule>Nuclear inclusion protein A</molecule>
    <text evidence="1">Has RNA-binding and proteolytic activities.</text>
</comment>
<comment type="function">
    <molecule>Nuclear inclusion protein B</molecule>
    <text>An RNA-dependent RNA polymerase that plays an essential role in the virus replication.</text>
</comment>
<comment type="catalytic activity">
    <reaction evidence="6">
        <text>RNA(n) + a ribonucleoside 5'-triphosphate = RNA(n+1) + diphosphate</text>
        <dbReference type="Rhea" id="RHEA:21248"/>
        <dbReference type="Rhea" id="RHEA-COMP:14527"/>
        <dbReference type="Rhea" id="RHEA-COMP:17342"/>
        <dbReference type="ChEBI" id="CHEBI:33019"/>
        <dbReference type="ChEBI" id="CHEBI:61557"/>
        <dbReference type="ChEBI" id="CHEBI:140395"/>
        <dbReference type="EC" id="2.7.7.48"/>
    </reaction>
</comment>
<comment type="catalytic activity">
    <reaction evidence="1">
        <text>Hydrolyzes glutaminyl bonds, and activity is further restricted by preferences for the amino acids in P6 - P1' that vary with the species of potyvirus, e.g. Glu-Xaa-Xaa-Tyr-Xaa-Gln-|-(Ser or Gly) for the enzyme from tobacco etch virus. The natural substrate is the viral polyprotein, but other proteins and oligopeptides containing the appropriate consensus sequence are also cleaved.</text>
        <dbReference type="EC" id="3.4.22.44"/>
    </reaction>
</comment>
<comment type="subcellular location">
    <molecule>6 kDa protein 1</molecule>
    <subcellularLocation>
        <location>Host cytoplasmic vesicle</location>
    </subcellularLocation>
    <text evidence="3">Probably colocalizes with 6K2-induced vesicles associated with host chloroplasts.</text>
</comment>
<comment type="subcellular location">
    <molecule>6 kDa protein 2</molecule>
    <subcellularLocation>
        <location evidence="2">Host cytoplasmic vesicle</location>
    </subcellularLocation>
    <text evidence="2">6K-induced vesicles associate with host chloroplasts.</text>
</comment>
<comment type="subcellular location">
    <molecule>Coat protein</molecule>
    <subcellularLocation>
        <location evidence="11">Virion</location>
    </subcellularLocation>
</comment>
<comment type="PTM">
    <molecule>Viral genome-linked protein</molecule>
    <text evidence="2">VPg is uridylylated by the polymerase and is covalently attached to the 5'-end of the genomic RNA. This uridylylated form acts as a nucleotide-peptide primer for the polymerase (By similarity).</text>
</comment>
<comment type="PTM">
    <molecule>Genome polyprotein 1</molecule>
    <text evidence="11">The viral RNA1 of bymoviruses is expressed as a single polyprotein which undergoes post-translational proteolytic processing by the main proteinase NIa-pro resulting in the production of at least eight individual proteins.</text>
</comment>
<comment type="similarity">
    <text evidence="11">Belongs to the bymoviruses polyprotein 1 family.</text>
</comment>